<proteinExistence type="inferred from homology"/>
<reference key="1">
    <citation type="journal article" date="2007" name="Photosyn. Res.">
        <title>Complete nucleotide sequence of the freshwater unicellular cyanobacterium Synechococcus elongatus PCC 6301 chromosome: gene content and organization.</title>
        <authorList>
            <person name="Sugita C."/>
            <person name="Ogata K."/>
            <person name="Shikata M."/>
            <person name="Jikuya H."/>
            <person name="Takano J."/>
            <person name="Furumichi M."/>
            <person name="Kanehisa M."/>
            <person name="Omata T."/>
            <person name="Sugiura M."/>
            <person name="Sugita M."/>
        </authorList>
    </citation>
    <scope>NUCLEOTIDE SEQUENCE [LARGE SCALE GENOMIC DNA]</scope>
    <source>
        <strain>ATCC 27144 / PCC 6301 / SAUG 1402/1</strain>
    </source>
</reference>
<dbReference type="EC" id="1.14.-.-" evidence="1"/>
<dbReference type="EMBL" id="AP008231">
    <property type="protein sequence ID" value="BAD80393.1"/>
    <property type="molecule type" value="Genomic_DNA"/>
</dbReference>
<dbReference type="RefSeq" id="WP_011244513.1">
    <property type="nucleotide sequence ID" value="NZ_CP085785.1"/>
</dbReference>
<dbReference type="SMR" id="Q5MZX7"/>
<dbReference type="KEGG" id="syc:syc2203_c"/>
<dbReference type="eggNOG" id="COG1054">
    <property type="taxonomic scope" value="Bacteria"/>
</dbReference>
<dbReference type="Proteomes" id="UP000001175">
    <property type="component" value="Chromosome"/>
</dbReference>
<dbReference type="GO" id="GO:0016705">
    <property type="term" value="F:oxidoreductase activity, acting on paired donors, with incorporation or reduction of molecular oxygen"/>
    <property type="evidence" value="ECO:0007669"/>
    <property type="project" value="UniProtKB-UniRule"/>
</dbReference>
<dbReference type="GO" id="GO:0006400">
    <property type="term" value="P:tRNA modification"/>
    <property type="evidence" value="ECO:0007669"/>
    <property type="project" value="UniProtKB-UniRule"/>
</dbReference>
<dbReference type="CDD" id="cd01518">
    <property type="entry name" value="RHOD_YceA"/>
    <property type="match status" value="1"/>
</dbReference>
<dbReference type="Gene3D" id="3.30.70.100">
    <property type="match status" value="1"/>
</dbReference>
<dbReference type="Gene3D" id="3.40.250.10">
    <property type="entry name" value="Rhodanese-like domain"/>
    <property type="match status" value="1"/>
</dbReference>
<dbReference type="HAMAP" id="MF_00469">
    <property type="entry name" value="TrhO"/>
    <property type="match status" value="1"/>
</dbReference>
<dbReference type="InterPro" id="IPR036046">
    <property type="entry name" value="Acylphosphatase-like_dom_sf"/>
</dbReference>
<dbReference type="InterPro" id="IPR001763">
    <property type="entry name" value="Rhodanese-like_dom"/>
</dbReference>
<dbReference type="InterPro" id="IPR036873">
    <property type="entry name" value="Rhodanese-like_dom_sf"/>
</dbReference>
<dbReference type="InterPro" id="IPR020936">
    <property type="entry name" value="TrhO"/>
</dbReference>
<dbReference type="InterPro" id="IPR040503">
    <property type="entry name" value="TRHO_N"/>
</dbReference>
<dbReference type="NCBIfam" id="NF001136">
    <property type="entry name" value="PRK00142.1-4"/>
    <property type="match status" value="1"/>
</dbReference>
<dbReference type="PANTHER" id="PTHR43268:SF3">
    <property type="entry name" value="RHODANESE-LIKE DOMAIN-CONTAINING PROTEIN 7-RELATED"/>
    <property type="match status" value="1"/>
</dbReference>
<dbReference type="PANTHER" id="PTHR43268">
    <property type="entry name" value="THIOSULFATE SULFURTRANSFERASE/RHODANESE-LIKE DOMAIN-CONTAINING PROTEIN 2"/>
    <property type="match status" value="1"/>
</dbReference>
<dbReference type="Pfam" id="PF00581">
    <property type="entry name" value="Rhodanese"/>
    <property type="match status" value="1"/>
</dbReference>
<dbReference type="Pfam" id="PF17773">
    <property type="entry name" value="UPF0176_N"/>
    <property type="match status" value="1"/>
</dbReference>
<dbReference type="SMART" id="SM00450">
    <property type="entry name" value="RHOD"/>
    <property type="match status" value="1"/>
</dbReference>
<dbReference type="SUPFAM" id="SSF54975">
    <property type="entry name" value="Acylphosphatase/BLUF domain-like"/>
    <property type="match status" value="1"/>
</dbReference>
<dbReference type="SUPFAM" id="SSF52821">
    <property type="entry name" value="Rhodanese/Cell cycle control phosphatase"/>
    <property type="match status" value="1"/>
</dbReference>
<dbReference type="PROSITE" id="PS50206">
    <property type="entry name" value="RHODANESE_3"/>
    <property type="match status" value="1"/>
</dbReference>
<name>TRHO_SYNP6</name>
<accession>Q5MZX7</accession>
<feature type="chain" id="PRO_0000161531" description="tRNA uridine(34) hydroxylase">
    <location>
        <begin position="1"/>
        <end position="269"/>
    </location>
</feature>
<feature type="domain" description="Rhodanese" evidence="1">
    <location>
        <begin position="122"/>
        <end position="216"/>
    </location>
</feature>
<feature type="active site" description="Cysteine persulfide intermediate" evidence="1">
    <location>
        <position position="176"/>
    </location>
</feature>
<comment type="function">
    <text evidence="1">Catalyzes oxygen-dependent 5-hydroxyuridine (ho5U) modification at position 34 in tRNAs.</text>
</comment>
<comment type="catalytic activity">
    <reaction evidence="1">
        <text>uridine(34) in tRNA + AH2 + O2 = 5-hydroxyuridine(34) in tRNA + A + H2O</text>
        <dbReference type="Rhea" id="RHEA:64224"/>
        <dbReference type="Rhea" id="RHEA-COMP:11727"/>
        <dbReference type="Rhea" id="RHEA-COMP:13381"/>
        <dbReference type="ChEBI" id="CHEBI:13193"/>
        <dbReference type="ChEBI" id="CHEBI:15377"/>
        <dbReference type="ChEBI" id="CHEBI:15379"/>
        <dbReference type="ChEBI" id="CHEBI:17499"/>
        <dbReference type="ChEBI" id="CHEBI:65315"/>
        <dbReference type="ChEBI" id="CHEBI:136877"/>
    </reaction>
</comment>
<comment type="similarity">
    <text evidence="1">Belongs to the TrhO family.</text>
</comment>
<evidence type="ECO:0000255" key="1">
    <source>
        <dbReference type="HAMAP-Rule" id="MF_00469"/>
    </source>
</evidence>
<protein>
    <recommendedName>
        <fullName evidence="1">tRNA uridine(34) hydroxylase</fullName>
        <ecNumber evidence="1">1.14.-.-</ecNumber>
    </recommendedName>
    <alternativeName>
        <fullName evidence="1">tRNA hydroxylation protein O</fullName>
    </alternativeName>
</protein>
<sequence length="269" mass="29967">MSLVLINFYRFVALGDCDRWRQWLQDLCTALGLRGTILLAPEGINAGLAGNTEAIAQFLSELQQHPPFANLSFKSATVTDWPFARLKVKVKPEIVSLGCPELNPAERTGTLVAPQDWNQLLQDPEVVLIDVRNRFEIALGSFPRAIDPQTDRFRDFPRFVQEQLLPQPPAKVAMFCTGGIRCEKASAYLLEQGIETVYQLEGGILNYLEAIAPEENHWQGDCFVFDERIAVDRQLQTPQHQLCPACGQPVVATTCSHCQDSVQASSSPK</sequence>
<keyword id="KW-0560">Oxidoreductase</keyword>
<keyword id="KW-0819">tRNA processing</keyword>
<gene>
    <name evidence="1" type="primary">trhO</name>
    <name type="ordered locus">syc2203_c</name>
</gene>
<organism>
    <name type="scientific">Synechococcus sp. (strain ATCC 27144 / PCC 6301 / SAUG 1402/1)</name>
    <name type="common">Anacystis nidulans</name>
    <dbReference type="NCBI Taxonomy" id="269084"/>
    <lineage>
        <taxon>Bacteria</taxon>
        <taxon>Bacillati</taxon>
        <taxon>Cyanobacteriota</taxon>
        <taxon>Cyanophyceae</taxon>
        <taxon>Synechococcales</taxon>
        <taxon>Synechococcaceae</taxon>
        <taxon>Synechococcus</taxon>
    </lineage>
</organism>